<reference key="1">
    <citation type="submission" date="2006-03" db="EMBL/GenBank/DDBJ databases">
        <title>Complete genome sequence of Francisella tularensis LVS (Live Vaccine Strain).</title>
        <authorList>
            <person name="Chain P."/>
            <person name="Larimer F."/>
            <person name="Land M."/>
            <person name="Stilwagen S."/>
            <person name="Larsson P."/>
            <person name="Bearden S."/>
            <person name="Chu M."/>
            <person name="Oyston P."/>
            <person name="Forsman M."/>
            <person name="Andersson S."/>
            <person name="Lindler L."/>
            <person name="Titball R."/>
            <person name="Garcia E."/>
        </authorList>
    </citation>
    <scope>NUCLEOTIDE SEQUENCE [LARGE SCALE GENOMIC DNA]</scope>
    <source>
        <strain>LVS</strain>
    </source>
</reference>
<organism>
    <name type="scientific">Francisella tularensis subsp. holarctica (strain LVS)</name>
    <dbReference type="NCBI Taxonomy" id="376619"/>
    <lineage>
        <taxon>Bacteria</taxon>
        <taxon>Pseudomonadati</taxon>
        <taxon>Pseudomonadota</taxon>
        <taxon>Gammaproteobacteria</taxon>
        <taxon>Thiotrichales</taxon>
        <taxon>Francisellaceae</taxon>
        <taxon>Francisella</taxon>
    </lineage>
</organism>
<accession>Q2A5H1</accession>
<dbReference type="EMBL" id="AM233362">
    <property type="protein sequence ID" value="CAJ78676.1"/>
    <property type="molecule type" value="Genomic_DNA"/>
</dbReference>
<dbReference type="SMR" id="Q2A5H1"/>
<dbReference type="KEGG" id="ftl:FTL_0235"/>
<dbReference type="Proteomes" id="UP000001944">
    <property type="component" value="Chromosome"/>
</dbReference>
<dbReference type="GO" id="GO:1990904">
    <property type="term" value="C:ribonucleoprotein complex"/>
    <property type="evidence" value="ECO:0007669"/>
    <property type="project" value="UniProtKB-KW"/>
</dbReference>
<dbReference type="GO" id="GO:0005840">
    <property type="term" value="C:ribosome"/>
    <property type="evidence" value="ECO:0007669"/>
    <property type="project" value="UniProtKB-KW"/>
</dbReference>
<dbReference type="GO" id="GO:0003735">
    <property type="term" value="F:structural constituent of ribosome"/>
    <property type="evidence" value="ECO:0007669"/>
    <property type="project" value="InterPro"/>
</dbReference>
<dbReference type="GO" id="GO:0000049">
    <property type="term" value="F:tRNA binding"/>
    <property type="evidence" value="ECO:0007669"/>
    <property type="project" value="UniProtKB-UniRule"/>
</dbReference>
<dbReference type="GO" id="GO:0006412">
    <property type="term" value="P:translation"/>
    <property type="evidence" value="ECO:0007669"/>
    <property type="project" value="UniProtKB-UniRule"/>
</dbReference>
<dbReference type="FunFam" id="3.30.70.600:FF:000001">
    <property type="entry name" value="30S ribosomal protein S10"/>
    <property type="match status" value="1"/>
</dbReference>
<dbReference type="Gene3D" id="3.30.70.600">
    <property type="entry name" value="Ribosomal protein S10 domain"/>
    <property type="match status" value="1"/>
</dbReference>
<dbReference type="HAMAP" id="MF_00508">
    <property type="entry name" value="Ribosomal_uS10"/>
    <property type="match status" value="1"/>
</dbReference>
<dbReference type="InterPro" id="IPR001848">
    <property type="entry name" value="Ribosomal_uS10"/>
</dbReference>
<dbReference type="InterPro" id="IPR027486">
    <property type="entry name" value="Ribosomal_uS10_dom"/>
</dbReference>
<dbReference type="InterPro" id="IPR036838">
    <property type="entry name" value="Ribosomal_uS10_dom_sf"/>
</dbReference>
<dbReference type="NCBIfam" id="NF001861">
    <property type="entry name" value="PRK00596.1"/>
    <property type="match status" value="1"/>
</dbReference>
<dbReference type="NCBIfam" id="TIGR01049">
    <property type="entry name" value="rpsJ_bact"/>
    <property type="match status" value="1"/>
</dbReference>
<dbReference type="PANTHER" id="PTHR11700">
    <property type="entry name" value="30S RIBOSOMAL PROTEIN S10 FAMILY MEMBER"/>
    <property type="match status" value="1"/>
</dbReference>
<dbReference type="Pfam" id="PF00338">
    <property type="entry name" value="Ribosomal_S10"/>
    <property type="match status" value="1"/>
</dbReference>
<dbReference type="PRINTS" id="PR00971">
    <property type="entry name" value="RIBOSOMALS10"/>
</dbReference>
<dbReference type="SMART" id="SM01403">
    <property type="entry name" value="Ribosomal_S10"/>
    <property type="match status" value="1"/>
</dbReference>
<dbReference type="SUPFAM" id="SSF54999">
    <property type="entry name" value="Ribosomal protein S10"/>
    <property type="match status" value="1"/>
</dbReference>
<evidence type="ECO:0000255" key="1">
    <source>
        <dbReference type="HAMAP-Rule" id="MF_00508"/>
    </source>
</evidence>
<evidence type="ECO:0000305" key="2"/>
<protein>
    <recommendedName>
        <fullName evidence="1">Small ribosomal subunit protein uS10</fullName>
    </recommendedName>
    <alternativeName>
        <fullName evidence="2">30S ribosomal protein S10</fullName>
    </alternativeName>
</protein>
<name>RS10_FRATH</name>
<keyword id="KW-1185">Reference proteome</keyword>
<keyword id="KW-0687">Ribonucleoprotein</keyword>
<keyword id="KW-0689">Ribosomal protein</keyword>
<sequence>MAINNQRIRIRLKAFDHKLIDISTQEIVDTAKKTGAQVKGPIPLPVRKEKFTILISPHVNKKARDQYEIRTHKRLIDIVEPTDKTVDALMKLDLASGVDVQISLS</sequence>
<proteinExistence type="inferred from homology"/>
<feature type="chain" id="PRO_0000258550" description="Small ribosomal subunit protein uS10">
    <location>
        <begin position="1"/>
        <end position="105"/>
    </location>
</feature>
<comment type="function">
    <text evidence="1">Involved in the binding of tRNA to the ribosomes.</text>
</comment>
<comment type="subunit">
    <text evidence="1">Part of the 30S ribosomal subunit.</text>
</comment>
<comment type="similarity">
    <text evidence="1">Belongs to the universal ribosomal protein uS10 family.</text>
</comment>
<gene>
    <name evidence="1" type="primary">rpsJ</name>
    <name type="ordered locus">FTL_0235</name>
</gene>